<proteinExistence type="inferred from homology"/>
<feature type="chain" id="PRO_0000350041" description="Probable dual-specificity RNA methyltransferase RlmN">
    <location>
        <begin position="1"/>
        <end position="344"/>
    </location>
</feature>
<feature type="domain" description="Radical SAM core" evidence="2">
    <location>
        <begin position="98"/>
        <end position="325"/>
    </location>
</feature>
<feature type="active site" description="Proton acceptor" evidence="1">
    <location>
        <position position="92"/>
    </location>
</feature>
<feature type="active site" description="S-methylcysteine intermediate" evidence="1">
    <location>
        <position position="330"/>
    </location>
</feature>
<feature type="binding site" evidence="1">
    <location>
        <position position="112"/>
    </location>
    <ligand>
        <name>[4Fe-4S] cluster</name>
        <dbReference type="ChEBI" id="CHEBI:49883"/>
        <note>4Fe-4S-S-AdoMet</note>
    </ligand>
</feature>
<feature type="binding site" evidence="1">
    <location>
        <position position="116"/>
    </location>
    <ligand>
        <name>[4Fe-4S] cluster</name>
        <dbReference type="ChEBI" id="CHEBI:49883"/>
        <note>4Fe-4S-S-AdoMet</note>
    </ligand>
</feature>
<feature type="binding site" evidence="1">
    <location>
        <position position="119"/>
    </location>
    <ligand>
        <name>[4Fe-4S] cluster</name>
        <dbReference type="ChEBI" id="CHEBI:49883"/>
        <note>4Fe-4S-S-AdoMet</note>
    </ligand>
</feature>
<feature type="binding site" evidence="1">
    <location>
        <begin position="157"/>
        <end position="158"/>
    </location>
    <ligand>
        <name>S-adenosyl-L-methionine</name>
        <dbReference type="ChEBI" id="CHEBI:59789"/>
    </ligand>
</feature>
<feature type="binding site" evidence="1">
    <location>
        <position position="189"/>
    </location>
    <ligand>
        <name>S-adenosyl-L-methionine</name>
        <dbReference type="ChEBI" id="CHEBI:59789"/>
    </ligand>
</feature>
<feature type="binding site" evidence="1">
    <location>
        <begin position="211"/>
        <end position="213"/>
    </location>
    <ligand>
        <name>S-adenosyl-L-methionine</name>
        <dbReference type="ChEBI" id="CHEBI:59789"/>
    </ligand>
</feature>
<feature type="binding site" evidence="1">
    <location>
        <position position="287"/>
    </location>
    <ligand>
        <name>S-adenosyl-L-methionine</name>
        <dbReference type="ChEBI" id="CHEBI:59789"/>
    </ligand>
</feature>
<feature type="disulfide bond" description="(transient)" evidence="1">
    <location>
        <begin position="105"/>
        <end position="330"/>
    </location>
</feature>
<dbReference type="EC" id="2.1.1.192" evidence="1"/>
<dbReference type="EMBL" id="CR626927">
    <property type="protein sequence ID" value="CAH06734.1"/>
    <property type="molecule type" value="Genomic_DNA"/>
</dbReference>
<dbReference type="RefSeq" id="WP_005785461.1">
    <property type="nucleotide sequence ID" value="NZ_UFTH01000001.1"/>
</dbReference>
<dbReference type="SMR" id="Q5LGK5"/>
<dbReference type="PaxDb" id="272559-BF9343_0953"/>
<dbReference type="GeneID" id="60368697"/>
<dbReference type="KEGG" id="bfs:BF9343_0953"/>
<dbReference type="eggNOG" id="COG0820">
    <property type="taxonomic scope" value="Bacteria"/>
</dbReference>
<dbReference type="HOGENOM" id="CLU_029101_0_0_10"/>
<dbReference type="Proteomes" id="UP000006731">
    <property type="component" value="Chromosome"/>
</dbReference>
<dbReference type="GO" id="GO:0005737">
    <property type="term" value="C:cytoplasm"/>
    <property type="evidence" value="ECO:0007669"/>
    <property type="project" value="UniProtKB-SubCell"/>
</dbReference>
<dbReference type="GO" id="GO:0051539">
    <property type="term" value="F:4 iron, 4 sulfur cluster binding"/>
    <property type="evidence" value="ECO:0007669"/>
    <property type="project" value="UniProtKB-UniRule"/>
</dbReference>
<dbReference type="GO" id="GO:0046872">
    <property type="term" value="F:metal ion binding"/>
    <property type="evidence" value="ECO:0007669"/>
    <property type="project" value="UniProtKB-KW"/>
</dbReference>
<dbReference type="GO" id="GO:0070040">
    <property type="term" value="F:rRNA (adenine(2503)-C2-)-methyltransferase activity"/>
    <property type="evidence" value="ECO:0007669"/>
    <property type="project" value="UniProtKB-UniRule"/>
</dbReference>
<dbReference type="GO" id="GO:0019843">
    <property type="term" value="F:rRNA binding"/>
    <property type="evidence" value="ECO:0007669"/>
    <property type="project" value="UniProtKB-UniRule"/>
</dbReference>
<dbReference type="GO" id="GO:0002935">
    <property type="term" value="F:tRNA (adenine(37)-C2)-methyltransferase activity"/>
    <property type="evidence" value="ECO:0007669"/>
    <property type="project" value="UniProtKB-UniRule"/>
</dbReference>
<dbReference type="GO" id="GO:0000049">
    <property type="term" value="F:tRNA binding"/>
    <property type="evidence" value="ECO:0007669"/>
    <property type="project" value="UniProtKB-UniRule"/>
</dbReference>
<dbReference type="GO" id="GO:0070475">
    <property type="term" value="P:rRNA base methylation"/>
    <property type="evidence" value="ECO:0007669"/>
    <property type="project" value="UniProtKB-UniRule"/>
</dbReference>
<dbReference type="GO" id="GO:0030488">
    <property type="term" value="P:tRNA methylation"/>
    <property type="evidence" value="ECO:0007669"/>
    <property type="project" value="UniProtKB-UniRule"/>
</dbReference>
<dbReference type="CDD" id="cd01335">
    <property type="entry name" value="Radical_SAM"/>
    <property type="match status" value="1"/>
</dbReference>
<dbReference type="FunFam" id="1.10.150.530:FF:000006">
    <property type="entry name" value="Probable dual-specificity RNA methyltransferase RlmN"/>
    <property type="match status" value="1"/>
</dbReference>
<dbReference type="FunFam" id="3.20.20.70:FF:000014">
    <property type="entry name" value="Probable dual-specificity RNA methyltransferase RlmN"/>
    <property type="match status" value="1"/>
</dbReference>
<dbReference type="Gene3D" id="1.10.150.530">
    <property type="match status" value="1"/>
</dbReference>
<dbReference type="Gene3D" id="3.20.20.70">
    <property type="entry name" value="Aldolase class I"/>
    <property type="match status" value="1"/>
</dbReference>
<dbReference type="HAMAP" id="MF_01849">
    <property type="entry name" value="RNA_methyltr_RlmN"/>
    <property type="match status" value="1"/>
</dbReference>
<dbReference type="InterPro" id="IPR013785">
    <property type="entry name" value="Aldolase_TIM"/>
</dbReference>
<dbReference type="InterPro" id="IPR040072">
    <property type="entry name" value="Methyltransferase_A"/>
</dbReference>
<dbReference type="InterPro" id="IPR048641">
    <property type="entry name" value="RlmN_N"/>
</dbReference>
<dbReference type="InterPro" id="IPR027492">
    <property type="entry name" value="RNA_MTrfase_RlmN"/>
</dbReference>
<dbReference type="InterPro" id="IPR004383">
    <property type="entry name" value="rRNA_lsu_MTrfase_RlmN/Cfr"/>
</dbReference>
<dbReference type="InterPro" id="IPR007197">
    <property type="entry name" value="rSAM"/>
</dbReference>
<dbReference type="NCBIfam" id="TIGR00048">
    <property type="entry name" value="rRNA_mod_RlmN"/>
    <property type="match status" value="1"/>
</dbReference>
<dbReference type="PANTHER" id="PTHR30544">
    <property type="entry name" value="23S RRNA METHYLTRANSFERASE"/>
    <property type="match status" value="1"/>
</dbReference>
<dbReference type="PANTHER" id="PTHR30544:SF5">
    <property type="entry name" value="RADICAL SAM CORE DOMAIN-CONTAINING PROTEIN"/>
    <property type="match status" value="1"/>
</dbReference>
<dbReference type="Pfam" id="PF04055">
    <property type="entry name" value="Radical_SAM"/>
    <property type="match status" value="1"/>
</dbReference>
<dbReference type="Pfam" id="PF21016">
    <property type="entry name" value="RlmN_N"/>
    <property type="match status" value="1"/>
</dbReference>
<dbReference type="PIRSF" id="PIRSF006004">
    <property type="entry name" value="CHP00048"/>
    <property type="match status" value="1"/>
</dbReference>
<dbReference type="SFLD" id="SFLDF00275">
    <property type="entry name" value="adenosine_C2_methyltransferase"/>
    <property type="match status" value="1"/>
</dbReference>
<dbReference type="SFLD" id="SFLDG01062">
    <property type="entry name" value="methyltransferase_(Class_A)"/>
    <property type="match status" value="1"/>
</dbReference>
<dbReference type="SUPFAM" id="SSF102114">
    <property type="entry name" value="Radical SAM enzymes"/>
    <property type="match status" value="1"/>
</dbReference>
<dbReference type="PROSITE" id="PS51918">
    <property type="entry name" value="RADICAL_SAM"/>
    <property type="match status" value="1"/>
</dbReference>
<name>RLMN_BACFN</name>
<organism>
    <name type="scientific">Bacteroides fragilis (strain ATCC 25285 / DSM 2151 / CCUG 4856 / JCM 11019 / LMG 10263 / NCTC 9343 / Onslow / VPI 2553 / EN-2)</name>
    <dbReference type="NCBI Taxonomy" id="272559"/>
    <lineage>
        <taxon>Bacteria</taxon>
        <taxon>Pseudomonadati</taxon>
        <taxon>Bacteroidota</taxon>
        <taxon>Bacteroidia</taxon>
        <taxon>Bacteroidales</taxon>
        <taxon>Bacteroidaceae</taxon>
        <taxon>Bacteroides</taxon>
    </lineage>
</organism>
<keyword id="KW-0004">4Fe-4S</keyword>
<keyword id="KW-0963">Cytoplasm</keyword>
<keyword id="KW-1015">Disulfide bond</keyword>
<keyword id="KW-0408">Iron</keyword>
<keyword id="KW-0411">Iron-sulfur</keyword>
<keyword id="KW-0479">Metal-binding</keyword>
<keyword id="KW-0489">Methyltransferase</keyword>
<keyword id="KW-0698">rRNA processing</keyword>
<keyword id="KW-0949">S-adenosyl-L-methionine</keyword>
<keyword id="KW-0808">Transferase</keyword>
<keyword id="KW-0819">tRNA processing</keyword>
<reference key="1">
    <citation type="journal article" date="2005" name="Science">
        <title>Extensive DNA inversions in the B. fragilis genome control variable gene expression.</title>
        <authorList>
            <person name="Cerdeno-Tarraga A.-M."/>
            <person name="Patrick S."/>
            <person name="Crossman L.C."/>
            <person name="Blakely G."/>
            <person name="Abratt V."/>
            <person name="Lennard N."/>
            <person name="Poxton I."/>
            <person name="Duerden B."/>
            <person name="Harris B."/>
            <person name="Quail M.A."/>
            <person name="Barron A."/>
            <person name="Clark L."/>
            <person name="Corton C."/>
            <person name="Doggett J."/>
            <person name="Holden M.T.G."/>
            <person name="Larke N."/>
            <person name="Line A."/>
            <person name="Lord A."/>
            <person name="Norbertczak H."/>
            <person name="Ormond D."/>
            <person name="Price C."/>
            <person name="Rabbinowitsch E."/>
            <person name="Woodward J."/>
            <person name="Barrell B.G."/>
            <person name="Parkhill J."/>
        </authorList>
    </citation>
    <scope>NUCLEOTIDE SEQUENCE [LARGE SCALE GENOMIC DNA]</scope>
    <source>
        <strain>ATCC 25285 / DSM 2151 / CCUG 4856 / JCM 11019 / LMG 10263 / NCTC 9343 / Onslow / VPI 2553 / EN-2</strain>
    </source>
</reference>
<gene>
    <name evidence="1" type="primary">rlmN</name>
    <name type="ordered locus">BF0995</name>
</gene>
<protein>
    <recommendedName>
        <fullName evidence="1">Probable dual-specificity RNA methyltransferase RlmN</fullName>
        <ecNumber evidence="1">2.1.1.192</ecNumber>
    </recommendedName>
    <alternativeName>
        <fullName evidence="1">23S rRNA (adenine(2503)-C(2))-methyltransferase</fullName>
    </alternativeName>
    <alternativeName>
        <fullName evidence="1">23S rRNA m2A2503 methyltransferase</fullName>
    </alternativeName>
    <alternativeName>
        <fullName evidence="1">Ribosomal RNA large subunit methyltransferase N</fullName>
    </alternativeName>
    <alternativeName>
        <fullName evidence="1">tRNA (adenine(37)-C(2))-methyltransferase</fullName>
    </alternativeName>
    <alternativeName>
        <fullName evidence="1">tRNA m2A37 methyltransferase</fullName>
    </alternativeName>
</protein>
<comment type="function">
    <text evidence="1">Specifically methylates position 2 of adenine 2503 in 23S rRNA and position 2 of adenine 37 in tRNAs.</text>
</comment>
<comment type="catalytic activity">
    <reaction evidence="1">
        <text>adenosine(2503) in 23S rRNA + 2 reduced [2Fe-2S]-[ferredoxin] + 2 S-adenosyl-L-methionine = 2-methyladenosine(2503) in 23S rRNA + 5'-deoxyadenosine + L-methionine + 2 oxidized [2Fe-2S]-[ferredoxin] + S-adenosyl-L-homocysteine</text>
        <dbReference type="Rhea" id="RHEA:42916"/>
        <dbReference type="Rhea" id="RHEA-COMP:10000"/>
        <dbReference type="Rhea" id="RHEA-COMP:10001"/>
        <dbReference type="Rhea" id="RHEA-COMP:10152"/>
        <dbReference type="Rhea" id="RHEA-COMP:10282"/>
        <dbReference type="ChEBI" id="CHEBI:17319"/>
        <dbReference type="ChEBI" id="CHEBI:33737"/>
        <dbReference type="ChEBI" id="CHEBI:33738"/>
        <dbReference type="ChEBI" id="CHEBI:57844"/>
        <dbReference type="ChEBI" id="CHEBI:57856"/>
        <dbReference type="ChEBI" id="CHEBI:59789"/>
        <dbReference type="ChEBI" id="CHEBI:74411"/>
        <dbReference type="ChEBI" id="CHEBI:74497"/>
        <dbReference type="EC" id="2.1.1.192"/>
    </reaction>
</comment>
<comment type="catalytic activity">
    <reaction evidence="1">
        <text>adenosine(37) in tRNA + 2 reduced [2Fe-2S]-[ferredoxin] + 2 S-adenosyl-L-methionine = 2-methyladenosine(37) in tRNA + 5'-deoxyadenosine + L-methionine + 2 oxidized [2Fe-2S]-[ferredoxin] + S-adenosyl-L-homocysteine</text>
        <dbReference type="Rhea" id="RHEA:43332"/>
        <dbReference type="Rhea" id="RHEA-COMP:10000"/>
        <dbReference type="Rhea" id="RHEA-COMP:10001"/>
        <dbReference type="Rhea" id="RHEA-COMP:10162"/>
        <dbReference type="Rhea" id="RHEA-COMP:10485"/>
        <dbReference type="ChEBI" id="CHEBI:17319"/>
        <dbReference type="ChEBI" id="CHEBI:33737"/>
        <dbReference type="ChEBI" id="CHEBI:33738"/>
        <dbReference type="ChEBI" id="CHEBI:57844"/>
        <dbReference type="ChEBI" id="CHEBI:57856"/>
        <dbReference type="ChEBI" id="CHEBI:59789"/>
        <dbReference type="ChEBI" id="CHEBI:74411"/>
        <dbReference type="ChEBI" id="CHEBI:74497"/>
        <dbReference type="EC" id="2.1.1.192"/>
    </reaction>
</comment>
<comment type="cofactor">
    <cofactor evidence="1">
        <name>[4Fe-4S] cluster</name>
        <dbReference type="ChEBI" id="CHEBI:49883"/>
    </cofactor>
    <text evidence="1">Binds 1 [4Fe-4S] cluster. The cluster is coordinated with 3 cysteines and an exchangeable S-adenosyl-L-methionine.</text>
</comment>
<comment type="subcellular location">
    <subcellularLocation>
        <location evidence="1">Cytoplasm</location>
    </subcellularLocation>
</comment>
<comment type="miscellaneous">
    <text evidence="1">Reaction proceeds by a ping-pong mechanism involving intermediate methylation of a conserved cysteine residue.</text>
</comment>
<comment type="similarity">
    <text evidence="1">Belongs to the radical SAM superfamily. RlmN family.</text>
</comment>
<evidence type="ECO:0000255" key="1">
    <source>
        <dbReference type="HAMAP-Rule" id="MF_01849"/>
    </source>
</evidence>
<evidence type="ECO:0000255" key="2">
    <source>
        <dbReference type="PROSITE-ProRule" id="PRU01266"/>
    </source>
</evidence>
<sequence length="344" mass="38572">MPKYPLLGMTLTELQSVTKDLGMPAFAAKQIASWLYDKKVTSIDEMTNLSLKHRELLKGEYDLGISAPVDEMRSVDGTVKYLYQVSDNHFVEAVYIPDEDRATLCVSSQVGCKMNCKFCMTGKQGFTASLTANQILNQIAALPERDKLTNVVMMGMGEPLDNLDEVLKALHILTASYGYGWSPKRITLSSVGLRKGLQRFIEESECHLAISLHSPFPSQRSELMPAERAFSIKEMVDLLKNYDFSKQRRLSFEYIVFKGVNDSLIYAKELLKLLRGLDCRVNLIRFHAIPGVDLEGAGMETMTSFRDYLTSHGLFTTIRASRGEDIFAACGMLSTAKQEESNKN</sequence>
<accession>Q5LGK5</accession>